<feature type="chain" id="PRO_0000117005" description="S-inosyl-L-homocysteine hydrolase">
    <location>
        <begin position="1"/>
        <end position="424"/>
    </location>
</feature>
<feature type="binding site" evidence="1">
    <location>
        <position position="130"/>
    </location>
    <ligand>
        <name>substrate</name>
    </ligand>
</feature>
<feature type="binding site" evidence="1">
    <location>
        <position position="155"/>
    </location>
    <ligand>
        <name>substrate</name>
    </ligand>
</feature>
<feature type="binding site" evidence="1">
    <location>
        <begin position="156"/>
        <end position="158"/>
    </location>
    <ligand>
        <name>NAD(+)</name>
        <dbReference type="ChEBI" id="CHEBI:57540"/>
    </ligand>
</feature>
<feature type="binding site" evidence="1">
    <location>
        <position position="185"/>
    </location>
    <ligand>
        <name>substrate</name>
    </ligand>
</feature>
<feature type="binding site" evidence="1">
    <location>
        <position position="189"/>
    </location>
    <ligand>
        <name>substrate</name>
    </ligand>
</feature>
<feature type="binding site" evidence="1">
    <location>
        <position position="190"/>
    </location>
    <ligand>
        <name>NAD(+)</name>
        <dbReference type="ChEBI" id="CHEBI:57540"/>
    </ligand>
</feature>
<feature type="binding site" evidence="1">
    <location>
        <begin position="219"/>
        <end position="224"/>
    </location>
    <ligand>
        <name>NAD(+)</name>
        <dbReference type="ChEBI" id="CHEBI:57540"/>
    </ligand>
</feature>
<feature type="binding site" evidence="1">
    <location>
        <position position="242"/>
    </location>
    <ligand>
        <name>NAD(+)</name>
        <dbReference type="ChEBI" id="CHEBI:57540"/>
    </ligand>
</feature>
<feature type="binding site" evidence="1">
    <location>
        <position position="277"/>
    </location>
    <ligand>
        <name>NAD(+)</name>
        <dbReference type="ChEBI" id="CHEBI:57540"/>
    </ligand>
</feature>
<feature type="binding site" evidence="1">
    <location>
        <begin position="298"/>
        <end position="300"/>
    </location>
    <ligand>
        <name>NAD(+)</name>
        <dbReference type="ChEBI" id="CHEBI:57540"/>
    </ligand>
</feature>
<feature type="binding site" evidence="1">
    <location>
        <position position="346"/>
    </location>
    <ligand>
        <name>NAD(+)</name>
        <dbReference type="ChEBI" id="CHEBI:57540"/>
    </ligand>
</feature>
<name>SIHH_METKA</name>
<gene>
    <name type="ordered locus">MK0368</name>
</gene>
<evidence type="ECO:0000255" key="1">
    <source>
        <dbReference type="HAMAP-Rule" id="MF_00563"/>
    </source>
</evidence>
<reference key="1">
    <citation type="journal article" date="2002" name="Proc. Natl. Acad. Sci. U.S.A.">
        <title>The complete genome of hyperthermophile Methanopyrus kandleri AV19 and monophyly of archaeal methanogens.</title>
        <authorList>
            <person name="Slesarev A.I."/>
            <person name="Mezhevaya K.V."/>
            <person name="Makarova K.S."/>
            <person name="Polushin N.N."/>
            <person name="Shcherbinina O.V."/>
            <person name="Shakhova V.V."/>
            <person name="Belova G.I."/>
            <person name="Aravind L."/>
            <person name="Natale D.A."/>
            <person name="Rogozin I.B."/>
            <person name="Tatusov R.L."/>
            <person name="Wolf Y.I."/>
            <person name="Stetter K.O."/>
            <person name="Malykh A.G."/>
            <person name="Koonin E.V."/>
            <person name="Kozyavkin S.A."/>
        </authorList>
    </citation>
    <scope>NUCLEOTIDE SEQUENCE [LARGE SCALE GENOMIC DNA]</scope>
    <source>
        <strain>AV19 / DSM 6324 / JCM 9639 / NBRC 100938</strain>
    </source>
</reference>
<comment type="function">
    <text evidence="1">Catalyzes the hydrolysis of S-inosyl-L-homocysteine (SIH) to L-homocysteine (Hcy) and inosine. Likely functions in a S-adenosyl-L-methionine (SAM) recycling pathway from S-adenosyl-L-homocysteine (SAH) produced from SAM-dependent methylation reactions. Can also catalyze the reverse reaction in vitro, i.e. the synthesis of SIH from Hcy and inosine.</text>
</comment>
<comment type="catalytic activity">
    <reaction evidence="1">
        <text>S-inosyl-L-homocysteine + H2O = L-homocysteine + inosine</text>
        <dbReference type="Rhea" id="RHEA:59828"/>
        <dbReference type="ChEBI" id="CHEBI:15377"/>
        <dbReference type="ChEBI" id="CHEBI:17596"/>
        <dbReference type="ChEBI" id="CHEBI:57985"/>
        <dbReference type="ChEBI" id="CHEBI:58199"/>
        <dbReference type="EC" id="3.13.1.9"/>
    </reaction>
    <physiologicalReaction direction="left-to-right" evidence="1">
        <dbReference type="Rhea" id="RHEA:59829"/>
    </physiologicalReaction>
</comment>
<comment type="cofactor">
    <cofactor evidence="1">
        <name>NAD(+)</name>
        <dbReference type="ChEBI" id="CHEBI:57540"/>
    </cofactor>
    <text evidence="1">Binds 1 NAD(+) per subunit.</text>
</comment>
<comment type="pathway">
    <text evidence="1">Amino-acid biosynthesis; S-adenosyl-L-methionine biosynthesis.</text>
</comment>
<comment type="subcellular location">
    <subcellularLocation>
        <location evidence="1">Cytoplasm</location>
    </subcellularLocation>
</comment>
<comment type="miscellaneous">
    <text evidence="1">SAH is a product of SAM methyltransferases and is known to be a feedback inhibitor of these enzymes. As a result of this inhibition, organisms have evolved efficient enzymes to metabolize SAH via different pathways. The pathway found in methanogens differs from the canonical pathway, it uses the deamination of S-adenosyl-L-homocysteine to form S-inosyl-L-homocysteine for the regeneration of SAM from S-adenosyl-L-homocysteine.</text>
</comment>
<comment type="similarity">
    <text evidence="1">Belongs to the adenosylhomocysteinase family.</text>
</comment>
<sequence length="424" mass="47016">MVVVKEGEYAIRDPSLAPKGRDMIEWARDHMPVLGAIRERFEEERPLEGITVGMTLHLEAKTAVLVETLMAGGAEVAITGCNPLSTKDEVAAALVEEGVHVYAWRGETEEEYYQNIDRVLSHEPDIIVDDGADCIARVHTEFPDLAERVIGATEETTTGVNRLHAMHREGVLKFPVIAVNDAKTKYLMDNRYGTGQSALDGLMRATNILLAGKTVVVVGYGWCGRGIARRARGLGANVIVVEVDPIKAMEAIFDGFRVMPMDRAAEEGDIFITATGNRDVIRGEHIEKMKDGVILANAGHFDVEIDKEYLEEHCEEKIDRRGGLVTEYRMPDGKRVYLIAEGRLVNLAAGEGHPIEIMDISFALQALSVEVLAKEGKEMEPGVYKVPKDVDKRVAELKLESMGIELEELTPEQREYMKSWEEGT</sequence>
<protein>
    <recommendedName>
        <fullName evidence="1">S-inosyl-L-homocysteine hydrolase</fullName>
        <shortName evidence="1">SIHH</shortName>
        <ecNumber evidence="1">3.13.1.9</ecNumber>
    </recommendedName>
</protein>
<organism>
    <name type="scientific">Methanopyrus kandleri (strain AV19 / DSM 6324 / JCM 9639 / NBRC 100938)</name>
    <dbReference type="NCBI Taxonomy" id="190192"/>
    <lineage>
        <taxon>Archaea</taxon>
        <taxon>Methanobacteriati</taxon>
        <taxon>Methanobacteriota</taxon>
        <taxon>Methanomada group</taxon>
        <taxon>Methanopyri</taxon>
        <taxon>Methanopyrales</taxon>
        <taxon>Methanopyraceae</taxon>
        <taxon>Methanopyrus</taxon>
    </lineage>
</organism>
<accession>P58855</accession>
<dbReference type="EC" id="3.13.1.9" evidence="1"/>
<dbReference type="EMBL" id="AE009439">
    <property type="protein sequence ID" value="AAM01583.1"/>
    <property type="molecule type" value="Genomic_DNA"/>
</dbReference>
<dbReference type="RefSeq" id="WP_011018738.1">
    <property type="nucleotide sequence ID" value="NC_003551.1"/>
</dbReference>
<dbReference type="SMR" id="P58855"/>
<dbReference type="FunCoup" id="P58855">
    <property type="interactions" value="118"/>
</dbReference>
<dbReference type="STRING" id="190192.MK0368"/>
<dbReference type="PaxDb" id="190192-MK0368"/>
<dbReference type="EnsemblBacteria" id="AAM01583">
    <property type="protein sequence ID" value="AAM01583"/>
    <property type="gene ID" value="MK0368"/>
</dbReference>
<dbReference type="GeneID" id="1477671"/>
<dbReference type="KEGG" id="mka:MK0368"/>
<dbReference type="PATRIC" id="fig|190192.8.peg.391"/>
<dbReference type="HOGENOM" id="CLU_025194_2_1_2"/>
<dbReference type="InParanoid" id="P58855"/>
<dbReference type="OrthoDB" id="8479at2157"/>
<dbReference type="UniPathway" id="UPA00315"/>
<dbReference type="Proteomes" id="UP000001826">
    <property type="component" value="Chromosome"/>
</dbReference>
<dbReference type="GO" id="GO:0005829">
    <property type="term" value="C:cytosol"/>
    <property type="evidence" value="ECO:0007669"/>
    <property type="project" value="TreeGrafter"/>
</dbReference>
<dbReference type="GO" id="GO:0004013">
    <property type="term" value="F:adenosylhomocysteinase activity"/>
    <property type="evidence" value="ECO:0007669"/>
    <property type="project" value="TreeGrafter"/>
</dbReference>
<dbReference type="GO" id="GO:0016802">
    <property type="term" value="F:trialkylsulfonium hydrolase activity"/>
    <property type="evidence" value="ECO:0007669"/>
    <property type="project" value="UniProtKB-UniRule"/>
</dbReference>
<dbReference type="GO" id="GO:0006730">
    <property type="term" value="P:one-carbon metabolic process"/>
    <property type="evidence" value="ECO:0007669"/>
    <property type="project" value="UniProtKB-KW"/>
</dbReference>
<dbReference type="GO" id="GO:0006556">
    <property type="term" value="P:S-adenosylmethionine biosynthetic process"/>
    <property type="evidence" value="ECO:0007669"/>
    <property type="project" value="UniProtKB-UniRule"/>
</dbReference>
<dbReference type="GO" id="GO:0033353">
    <property type="term" value="P:S-adenosylmethionine cycle"/>
    <property type="evidence" value="ECO:0007669"/>
    <property type="project" value="TreeGrafter"/>
</dbReference>
<dbReference type="CDD" id="cd00401">
    <property type="entry name" value="SAHH"/>
    <property type="match status" value="1"/>
</dbReference>
<dbReference type="FunFam" id="3.40.50.720:FF:000004">
    <property type="entry name" value="Adenosylhomocysteinase"/>
    <property type="match status" value="1"/>
</dbReference>
<dbReference type="Gene3D" id="3.40.50.1480">
    <property type="entry name" value="Adenosylhomocysteinase-like"/>
    <property type="match status" value="1"/>
</dbReference>
<dbReference type="Gene3D" id="3.40.50.720">
    <property type="entry name" value="NAD(P)-binding Rossmann-like Domain"/>
    <property type="match status" value="1"/>
</dbReference>
<dbReference type="HAMAP" id="MF_00563">
    <property type="entry name" value="AdoHcyase"/>
    <property type="match status" value="1"/>
</dbReference>
<dbReference type="InterPro" id="IPR042172">
    <property type="entry name" value="Adenosylhomocyst_ase-like_sf"/>
</dbReference>
<dbReference type="InterPro" id="IPR000043">
    <property type="entry name" value="Adenosylhomocysteinase-like"/>
</dbReference>
<dbReference type="InterPro" id="IPR015878">
    <property type="entry name" value="Ado_hCys_hydrolase_NAD-bd"/>
</dbReference>
<dbReference type="InterPro" id="IPR036291">
    <property type="entry name" value="NAD(P)-bd_dom_sf"/>
</dbReference>
<dbReference type="InterPro" id="IPR020082">
    <property type="entry name" value="S-Ado-L-homoCys_hydrolase_CS"/>
</dbReference>
<dbReference type="NCBIfam" id="TIGR00936">
    <property type="entry name" value="ahcY"/>
    <property type="match status" value="1"/>
</dbReference>
<dbReference type="NCBIfam" id="NF004005">
    <property type="entry name" value="PRK05476.2-3"/>
    <property type="match status" value="1"/>
</dbReference>
<dbReference type="PANTHER" id="PTHR23420">
    <property type="entry name" value="ADENOSYLHOMOCYSTEINASE"/>
    <property type="match status" value="1"/>
</dbReference>
<dbReference type="PANTHER" id="PTHR23420:SF0">
    <property type="entry name" value="ADENOSYLHOMOCYSTEINASE"/>
    <property type="match status" value="1"/>
</dbReference>
<dbReference type="Pfam" id="PF05221">
    <property type="entry name" value="AdoHcyase"/>
    <property type="match status" value="1"/>
</dbReference>
<dbReference type="Pfam" id="PF00670">
    <property type="entry name" value="AdoHcyase_NAD"/>
    <property type="match status" value="1"/>
</dbReference>
<dbReference type="PIRSF" id="PIRSF001109">
    <property type="entry name" value="Ad_hcy_hydrolase"/>
    <property type="match status" value="1"/>
</dbReference>
<dbReference type="SMART" id="SM00996">
    <property type="entry name" value="AdoHcyase"/>
    <property type="match status" value="1"/>
</dbReference>
<dbReference type="SMART" id="SM00997">
    <property type="entry name" value="AdoHcyase_NAD"/>
    <property type="match status" value="1"/>
</dbReference>
<dbReference type="SUPFAM" id="SSF52283">
    <property type="entry name" value="Formate/glycerate dehydrogenase catalytic domain-like"/>
    <property type="match status" value="1"/>
</dbReference>
<dbReference type="SUPFAM" id="SSF51735">
    <property type="entry name" value="NAD(P)-binding Rossmann-fold domains"/>
    <property type="match status" value="1"/>
</dbReference>
<dbReference type="PROSITE" id="PS00738">
    <property type="entry name" value="ADOHCYASE_1"/>
    <property type="match status" value="1"/>
</dbReference>
<dbReference type="PROSITE" id="PS00739">
    <property type="entry name" value="ADOHCYASE_2"/>
    <property type="match status" value="1"/>
</dbReference>
<proteinExistence type="inferred from homology"/>
<keyword id="KW-0963">Cytoplasm</keyword>
<keyword id="KW-0378">Hydrolase</keyword>
<keyword id="KW-0520">NAD</keyword>
<keyword id="KW-0554">One-carbon metabolism</keyword>
<keyword id="KW-1185">Reference proteome</keyword>